<reference key="1">
    <citation type="journal article" date="2007" name="J. Virol.">
        <title>Comparative analysis of twelve genomes of three novel group 2c and group 2d coronaviruses reveals unique group and subgroup features.</title>
        <authorList>
            <person name="Woo P.C.Y."/>
            <person name="Wang M."/>
            <person name="Lau S.K.P."/>
            <person name="Xu H.F."/>
            <person name="Poon R.W.S."/>
            <person name="Guo R."/>
            <person name="Wong B.H.L."/>
            <person name="Gao K."/>
            <person name="Tsoi H.-W."/>
            <person name="Huang Y."/>
            <person name="Li K.S.M."/>
            <person name="Lam C.S.F."/>
            <person name="Chan K.-H."/>
            <person name="Zheng B.-J."/>
            <person name="Yuen K.-Y."/>
        </authorList>
    </citation>
    <scope>NUCLEOTIDE SEQUENCE [GENOMIC RNA]</scope>
    <source>
        <strain>Isolate HKU5-1</strain>
    </source>
</reference>
<reference key="2">
    <citation type="journal article" date="2014" name="J. Gen. Virol.">
        <title>The ORF4b-encoded accessory proteins of Middle East respiratory syndrome coronavirus and two related bat coronaviruses localize to the nucleus and inhibit innate immune signalling.</title>
        <authorList>
            <person name="Matthews K.L."/>
            <person name="Coleman C.M."/>
            <person name="van der Meer Y."/>
            <person name="Snijder E.J."/>
            <person name="Frieman M.B."/>
        </authorList>
    </citation>
    <scope>FUNCTION</scope>
    <scope>SUBCELLULAR LOCATION</scope>
</reference>
<dbReference type="EMBL" id="EF065509">
    <property type="protein sequence ID" value="ABN10878.1"/>
    <property type="molecule type" value="Genomic_RNA"/>
</dbReference>
<dbReference type="PDB" id="7RG6">
    <property type="method" value="X-ray"/>
    <property type="resolution" value="2.10 A"/>
    <property type="chains" value="C/D=29-48"/>
</dbReference>
<dbReference type="PDBsum" id="7RG6"/>
<dbReference type="SMR" id="A3EXD3"/>
<dbReference type="KEGG" id="vg:4836006"/>
<dbReference type="OrthoDB" id="20801at10239"/>
<dbReference type="Proteomes" id="UP000007451">
    <property type="component" value="Segment"/>
</dbReference>
<dbReference type="GO" id="GO:0030430">
    <property type="term" value="C:host cell cytoplasm"/>
    <property type="evidence" value="ECO:0007669"/>
    <property type="project" value="UniProtKB-SubCell"/>
</dbReference>
<dbReference type="GO" id="GO:0044196">
    <property type="term" value="C:host cell nucleolus"/>
    <property type="evidence" value="ECO:0007669"/>
    <property type="project" value="UniProtKB-SubCell"/>
</dbReference>
<dbReference type="GO" id="GO:0042025">
    <property type="term" value="C:host cell nucleus"/>
    <property type="evidence" value="ECO:0000314"/>
    <property type="project" value="UniProtKB"/>
</dbReference>
<dbReference type="GO" id="GO:0039724">
    <property type="term" value="P:symbiont-mediated suppression of host cytoplasmic pattern recognition receptor signaling pathway via inhibition of IKBKE activity"/>
    <property type="evidence" value="ECO:0007669"/>
    <property type="project" value="UniProtKB-KW"/>
</dbReference>
<dbReference type="GO" id="GO:0039502">
    <property type="term" value="P:symbiont-mediated suppression of host type I interferon-mediated signaling pathway"/>
    <property type="evidence" value="ECO:0000314"/>
    <property type="project" value="UniProtKB"/>
</dbReference>
<dbReference type="CDD" id="cd21653">
    <property type="entry name" value="ORF4b_HKU5-CoV"/>
    <property type="match status" value="1"/>
</dbReference>
<dbReference type="InterPro" id="IPR044318">
    <property type="entry name" value="ORF4b_HKU5-CoV"/>
</dbReference>
<organism>
    <name type="scientific">Bat coronavirus HKU5</name>
    <name type="common">BtCoV</name>
    <name type="synonym">BtCoV/HKU5/2004</name>
    <dbReference type="NCBI Taxonomy" id="694008"/>
    <lineage>
        <taxon>Viruses</taxon>
        <taxon>Riboviria</taxon>
        <taxon>Orthornavirae</taxon>
        <taxon>Pisuviricota</taxon>
        <taxon>Pisoniviricetes</taxon>
        <taxon>Nidovirales</taxon>
        <taxon>Cornidovirineae</taxon>
        <taxon>Coronaviridae</taxon>
        <taxon>Orthocoronavirinae</taxon>
        <taxon>Betacoronavirus</taxon>
        <taxon>Merbecovirus</taxon>
    </lineage>
</organism>
<organismHost>
    <name type="scientific">Pipistrellus abramus</name>
    <name type="common">Japanese pipistrelle</name>
    <name type="synonym">Pipistrellus javanicus abramus</name>
    <dbReference type="NCBI Taxonomy" id="105295"/>
</organismHost>
<proteinExistence type="evidence at protein level"/>
<feature type="chain" id="PRO_0000290269" description="Non-structural protein ORF4b">
    <location>
        <begin position="1"/>
        <end position="256"/>
    </location>
</feature>
<protein>
    <recommendedName>
        <fullName>Non-structural protein ORF4b</fullName>
        <shortName>ORF4b</shortName>
    </recommendedName>
</protein>
<keyword id="KW-0002">3D-structure</keyword>
<keyword id="KW-1035">Host cytoplasm</keyword>
<keyword id="KW-1048">Host nucleus</keyword>
<keyword id="KW-0945">Host-virus interaction</keyword>
<keyword id="KW-1224">Inhibition of host IKBKE by virus</keyword>
<keyword id="KW-1090">Inhibition of host innate immune response by virus</keyword>
<keyword id="KW-1113">Inhibition of host RLR pathway by virus</keyword>
<keyword id="KW-1185">Reference proteome</keyword>
<keyword id="KW-0899">Viral immunoevasion</keyword>
<gene>
    <name type="primary">ORF4b</name>
</gene>
<accession>A3EXD3</accession>
<comment type="function">
    <text evidence="2">Plays a role in the inhibition of host innate immunity by inhibiting the interaction between host IKBKE and MAVS. In turn, this inhibition prevents the production of host interferon beta. Additionally, may also interfere with host antiviral response within the nucleus.</text>
</comment>
<comment type="subcellular location">
    <subcellularLocation>
        <location evidence="2">Host nucleus</location>
    </subcellularLocation>
    <subcellularLocation>
        <location evidence="1">Host nucleus</location>
        <location evidence="1">Host nucleolus</location>
    </subcellularLocation>
    <subcellularLocation>
        <location evidence="1">Host cytoplasm</location>
    </subcellularLocation>
    <text evidence="1">Mainly localized in the host nucleus.</text>
</comment>
<sequence>MDDSMDLDLDCVIAQPSSTIVMMPLSPISTRKRRRHPMNKRRYAKRRFTPVEPNDIIMCDKPTHCIRLVFDQSLRWVHFDGIKNILTDYDVIFNPDLHVTVALVCAGNGVTFSDLTPLTFILADMLLEFNGIFTLGQTLVIGAREYHWLPQELKTNVGKAIPQAKEWLVDHGYNVYHTGLPTHMSLAKLHSLDFVQQSYVGSKFFIKHSHTTEYAMPVCLQVIAIDGEKVDGRSKPLFQYPIHNHYRHYRACFPGR</sequence>
<name>ORF4B_BCHK5</name>
<evidence type="ECO:0000250" key="1">
    <source>
        <dbReference type="UniProtKB" id="K9N643"/>
    </source>
</evidence>
<evidence type="ECO:0000269" key="2">
    <source>
    </source>
</evidence>